<comment type="function">
    <text evidence="1">One of the early assembly proteins it binds 23S rRNA. One of the proteins that surrounds the polypeptide exit tunnel on the outside of the ribosome. Forms the main docking site for trigger factor binding to the ribosome.</text>
</comment>
<comment type="subunit">
    <text evidence="1">Part of the 50S ribosomal subunit. Contacts protein L29, and trigger factor when it is bound to the ribosome.</text>
</comment>
<comment type="similarity">
    <text evidence="1">Belongs to the universal ribosomal protein uL23 family.</text>
</comment>
<protein>
    <recommendedName>
        <fullName evidence="1">Large ribosomal subunit protein uL23</fullName>
    </recommendedName>
    <alternativeName>
        <fullName evidence="2">50S ribosomal protein L23</fullName>
    </alternativeName>
</protein>
<evidence type="ECO:0000255" key="1">
    <source>
        <dbReference type="HAMAP-Rule" id="MF_01369"/>
    </source>
</evidence>
<evidence type="ECO:0000305" key="2"/>
<feature type="chain" id="PRO_0000272696" description="Large ribosomal subunit protein uL23">
    <location>
        <begin position="1"/>
        <end position="101"/>
    </location>
</feature>
<proteinExistence type="inferred from homology"/>
<sequence length="101" mass="11231">MSGFSQERLMQVLLAPQISEKATYVADKNEQVVFKVASTATKPEVKAAVELLFKVEVKSVQIANVKGKVKRFGKMTGRRKDWKKAFVCLKPGQEINFAAGE</sequence>
<reference key="1">
    <citation type="journal article" date="2005" name="Arch. Microbiol.">
        <title>The genome sequence of an anaerobic aromatic-degrading denitrifying bacterium, strain EbN1.</title>
        <authorList>
            <person name="Rabus R."/>
            <person name="Kube M."/>
            <person name="Heider J."/>
            <person name="Beck A."/>
            <person name="Heitmann K."/>
            <person name="Widdel F."/>
            <person name="Reinhardt R."/>
        </authorList>
    </citation>
    <scope>NUCLEOTIDE SEQUENCE [LARGE SCALE GENOMIC DNA]</scope>
    <source>
        <strain>DSM 19018 / LMG 30748 / EbN1</strain>
    </source>
</reference>
<accession>Q5P330</accession>
<keyword id="KW-1185">Reference proteome</keyword>
<keyword id="KW-0687">Ribonucleoprotein</keyword>
<keyword id="KW-0689">Ribosomal protein</keyword>
<keyword id="KW-0694">RNA-binding</keyword>
<keyword id="KW-0699">rRNA-binding</keyword>
<gene>
    <name evidence="1" type="primary">rplW</name>
    <name type="ordered locus">AZOSEA21590</name>
    <name type="ORF">ebB125</name>
</gene>
<name>RL23_AROAE</name>
<organism>
    <name type="scientific">Aromatoleum aromaticum (strain DSM 19018 / LMG 30748 / EbN1)</name>
    <name type="common">Azoarcus sp. (strain EbN1)</name>
    <dbReference type="NCBI Taxonomy" id="76114"/>
    <lineage>
        <taxon>Bacteria</taxon>
        <taxon>Pseudomonadati</taxon>
        <taxon>Pseudomonadota</taxon>
        <taxon>Betaproteobacteria</taxon>
        <taxon>Rhodocyclales</taxon>
        <taxon>Rhodocyclaceae</taxon>
        <taxon>Aromatoleum</taxon>
    </lineage>
</organism>
<dbReference type="EMBL" id="CR555306">
    <property type="protein sequence ID" value="CAI08284.1"/>
    <property type="molecule type" value="Genomic_DNA"/>
</dbReference>
<dbReference type="RefSeq" id="WP_011237974.1">
    <property type="nucleotide sequence ID" value="NC_006513.1"/>
</dbReference>
<dbReference type="SMR" id="Q5P330"/>
<dbReference type="STRING" id="76114.ebB125"/>
<dbReference type="KEGG" id="eba:ebB125"/>
<dbReference type="eggNOG" id="COG0089">
    <property type="taxonomic scope" value="Bacteria"/>
</dbReference>
<dbReference type="HOGENOM" id="CLU_037562_3_1_4"/>
<dbReference type="OrthoDB" id="9793353at2"/>
<dbReference type="Proteomes" id="UP000006552">
    <property type="component" value="Chromosome"/>
</dbReference>
<dbReference type="GO" id="GO:1990904">
    <property type="term" value="C:ribonucleoprotein complex"/>
    <property type="evidence" value="ECO:0007669"/>
    <property type="project" value="UniProtKB-KW"/>
</dbReference>
<dbReference type="GO" id="GO:0005840">
    <property type="term" value="C:ribosome"/>
    <property type="evidence" value="ECO:0007669"/>
    <property type="project" value="UniProtKB-KW"/>
</dbReference>
<dbReference type="GO" id="GO:0019843">
    <property type="term" value="F:rRNA binding"/>
    <property type="evidence" value="ECO:0007669"/>
    <property type="project" value="UniProtKB-UniRule"/>
</dbReference>
<dbReference type="GO" id="GO:0003735">
    <property type="term" value="F:structural constituent of ribosome"/>
    <property type="evidence" value="ECO:0007669"/>
    <property type="project" value="InterPro"/>
</dbReference>
<dbReference type="GO" id="GO:0006412">
    <property type="term" value="P:translation"/>
    <property type="evidence" value="ECO:0007669"/>
    <property type="project" value="UniProtKB-UniRule"/>
</dbReference>
<dbReference type="FunFam" id="3.30.70.330:FF:000001">
    <property type="entry name" value="50S ribosomal protein L23"/>
    <property type="match status" value="1"/>
</dbReference>
<dbReference type="Gene3D" id="3.30.70.330">
    <property type="match status" value="1"/>
</dbReference>
<dbReference type="HAMAP" id="MF_01369_B">
    <property type="entry name" value="Ribosomal_uL23_B"/>
    <property type="match status" value="1"/>
</dbReference>
<dbReference type="InterPro" id="IPR012677">
    <property type="entry name" value="Nucleotide-bd_a/b_plait_sf"/>
</dbReference>
<dbReference type="InterPro" id="IPR013025">
    <property type="entry name" value="Ribosomal_uL23-like"/>
</dbReference>
<dbReference type="InterPro" id="IPR012678">
    <property type="entry name" value="Ribosomal_uL23/eL15/eS24_sf"/>
</dbReference>
<dbReference type="NCBIfam" id="NF004359">
    <property type="entry name" value="PRK05738.1-3"/>
    <property type="match status" value="1"/>
</dbReference>
<dbReference type="NCBIfam" id="NF004363">
    <property type="entry name" value="PRK05738.2-4"/>
    <property type="match status" value="1"/>
</dbReference>
<dbReference type="PANTHER" id="PTHR11620">
    <property type="entry name" value="60S RIBOSOMAL PROTEIN L23A"/>
    <property type="match status" value="1"/>
</dbReference>
<dbReference type="Pfam" id="PF00276">
    <property type="entry name" value="Ribosomal_L23"/>
    <property type="match status" value="1"/>
</dbReference>
<dbReference type="SUPFAM" id="SSF54189">
    <property type="entry name" value="Ribosomal proteins S24e, L23 and L15e"/>
    <property type="match status" value="1"/>
</dbReference>